<name>PSA_PAEAT</name>
<sequence length="235" mass="25787">MTQQFYVSPEQLMKDRADFARKGIARGRSVVVISCADGIALIAENPSPSLHKIGEIYDKIAFAAVGKYNEFESLRQAGVRYADVRGYSYDREDVTARGLASVYAQSLGAVFTAEQKPFEVELAVAEVGVTQEQDHLYRLTFDGSIADENGFVVMGGLADQISDVVNGAWEPELNLAGAMQLALRALATNKEVEELPAAAVEAAVLYRDSESNRGSRRAFRRLLPEDMTRLLTEES</sequence>
<dbReference type="EMBL" id="CP000474">
    <property type="protein sequence ID" value="ABM08850.1"/>
    <property type="status" value="ALT_INIT"/>
    <property type="molecule type" value="Genomic_DNA"/>
</dbReference>
<dbReference type="RefSeq" id="WP_014921928.1">
    <property type="nucleotide sequence ID" value="NC_008711.1"/>
</dbReference>
<dbReference type="SMR" id="A1R6Q8"/>
<dbReference type="STRING" id="290340.AAur_2178"/>
<dbReference type="MEROPS" id="T01.980"/>
<dbReference type="KEGG" id="aau:AAur_2178"/>
<dbReference type="eggNOG" id="COG0638">
    <property type="taxonomic scope" value="Bacteria"/>
</dbReference>
<dbReference type="HOGENOM" id="CLU_071031_0_0_11"/>
<dbReference type="OrthoDB" id="9775643at2"/>
<dbReference type="UniPathway" id="UPA00997"/>
<dbReference type="Proteomes" id="UP000000637">
    <property type="component" value="Chromosome"/>
</dbReference>
<dbReference type="GO" id="GO:0005737">
    <property type="term" value="C:cytoplasm"/>
    <property type="evidence" value="ECO:0007669"/>
    <property type="project" value="UniProtKB-SubCell"/>
</dbReference>
<dbReference type="GO" id="GO:0019773">
    <property type="term" value="C:proteasome core complex, alpha-subunit complex"/>
    <property type="evidence" value="ECO:0007669"/>
    <property type="project" value="UniProtKB-UniRule"/>
</dbReference>
<dbReference type="GO" id="GO:0004298">
    <property type="term" value="F:threonine-type endopeptidase activity"/>
    <property type="evidence" value="ECO:0007669"/>
    <property type="project" value="InterPro"/>
</dbReference>
<dbReference type="GO" id="GO:0019941">
    <property type="term" value="P:modification-dependent protein catabolic process"/>
    <property type="evidence" value="ECO:0007669"/>
    <property type="project" value="UniProtKB-UniRule"/>
</dbReference>
<dbReference type="GO" id="GO:0010498">
    <property type="term" value="P:proteasomal protein catabolic process"/>
    <property type="evidence" value="ECO:0007669"/>
    <property type="project" value="UniProtKB-UniRule"/>
</dbReference>
<dbReference type="CDD" id="cd01906">
    <property type="entry name" value="proteasome_protease_HslV"/>
    <property type="match status" value="1"/>
</dbReference>
<dbReference type="Gene3D" id="3.60.20.10">
    <property type="entry name" value="Glutamine Phosphoribosylpyrophosphate, subunit 1, domain 1"/>
    <property type="match status" value="1"/>
</dbReference>
<dbReference type="HAMAP" id="MF_00289_B">
    <property type="entry name" value="Proteasome_A_B"/>
    <property type="match status" value="1"/>
</dbReference>
<dbReference type="InterPro" id="IPR029055">
    <property type="entry name" value="Ntn_hydrolases_N"/>
</dbReference>
<dbReference type="InterPro" id="IPR023332">
    <property type="entry name" value="Proteasome_alpha-type"/>
</dbReference>
<dbReference type="InterPro" id="IPR022296">
    <property type="entry name" value="Proteasome_asu_bac"/>
</dbReference>
<dbReference type="InterPro" id="IPR001353">
    <property type="entry name" value="Proteasome_sua/b"/>
</dbReference>
<dbReference type="NCBIfam" id="TIGR03691">
    <property type="entry name" value="20S_bact_alpha"/>
    <property type="match status" value="1"/>
</dbReference>
<dbReference type="Pfam" id="PF00227">
    <property type="entry name" value="Proteasome"/>
    <property type="match status" value="1"/>
</dbReference>
<dbReference type="SUPFAM" id="SSF56235">
    <property type="entry name" value="N-terminal nucleophile aminohydrolases (Ntn hydrolases)"/>
    <property type="match status" value="1"/>
</dbReference>
<dbReference type="PROSITE" id="PS51475">
    <property type="entry name" value="PROTEASOME_ALPHA_2"/>
    <property type="match status" value="1"/>
</dbReference>
<proteinExistence type="inferred from homology"/>
<gene>
    <name evidence="1" type="primary">prcA</name>
    <name type="ordered locus">AAur_2178</name>
</gene>
<reference key="1">
    <citation type="journal article" date="2006" name="PLoS Genet.">
        <title>Secrets of soil survival revealed by the genome sequence of Arthrobacter aurescens TC1.</title>
        <authorList>
            <person name="Mongodin E.F."/>
            <person name="Shapir N."/>
            <person name="Daugherty S.C."/>
            <person name="DeBoy R.T."/>
            <person name="Emerson J.B."/>
            <person name="Shvartzbeyn A."/>
            <person name="Radune D."/>
            <person name="Vamathevan J."/>
            <person name="Riggs F."/>
            <person name="Grinberg V."/>
            <person name="Khouri H.M."/>
            <person name="Wackett L.P."/>
            <person name="Nelson K.E."/>
            <person name="Sadowsky M.J."/>
        </authorList>
    </citation>
    <scope>NUCLEOTIDE SEQUENCE [LARGE SCALE GENOMIC DNA]</scope>
    <source>
        <strain>TC1</strain>
    </source>
</reference>
<comment type="function">
    <text evidence="1">Component of the proteasome core, a large protease complex with broad specificity involved in protein degradation.</text>
</comment>
<comment type="activity regulation">
    <text evidence="1">The formation of the proteasomal ATPase ARC-20S proteasome complex, likely via the docking of the C-termini of ARC into the intersubunit pockets in the alpha-rings, may trigger opening of the gate for substrate entry. Interconversion between the open-gate and close-gate conformations leads to a dynamic regulation of the 20S proteasome proteolysis activity.</text>
</comment>
<comment type="pathway">
    <text evidence="1">Protein degradation; proteasomal Pup-dependent pathway.</text>
</comment>
<comment type="subunit">
    <text evidence="1">The 20S proteasome core is composed of 14 alpha and 14 beta subunits that assemble into four stacked heptameric rings, resulting in a barrel-shaped structure. The two inner rings, each composed of seven catalytic beta subunits, are sandwiched by two outer rings, each composed of seven alpha subunits. The catalytic chamber with the active sites is on the inside of the barrel. Has a gated structure, the ends of the cylinder being occluded by the N-termini of the alpha-subunits. Is capped by the proteasome-associated ATPase, ARC.</text>
</comment>
<comment type="subcellular location">
    <subcellularLocation>
        <location evidence="1">Cytoplasm</location>
    </subcellularLocation>
</comment>
<comment type="similarity">
    <text evidence="1">Belongs to the peptidase T1A family.</text>
</comment>
<comment type="sequence caution" evidence="2">
    <conflict type="erroneous initiation">
        <sequence resource="EMBL-CDS" id="ABM08850"/>
    </conflict>
    <text>Extended N-terminus.</text>
</comment>
<keyword id="KW-0963">Cytoplasm</keyword>
<keyword id="KW-0647">Proteasome</keyword>
<accession>A1R6Q8</accession>
<feature type="chain" id="PRO_0000397133" description="Proteasome subunit alpha">
    <location>
        <begin position="1"/>
        <end position="235"/>
    </location>
</feature>
<organism>
    <name type="scientific">Paenarthrobacter aurescens (strain TC1)</name>
    <dbReference type="NCBI Taxonomy" id="290340"/>
    <lineage>
        <taxon>Bacteria</taxon>
        <taxon>Bacillati</taxon>
        <taxon>Actinomycetota</taxon>
        <taxon>Actinomycetes</taxon>
        <taxon>Micrococcales</taxon>
        <taxon>Micrococcaceae</taxon>
        <taxon>Paenarthrobacter</taxon>
    </lineage>
</organism>
<protein>
    <recommendedName>
        <fullName evidence="1">Proteasome subunit alpha</fullName>
    </recommendedName>
    <alternativeName>
        <fullName evidence="1">20S proteasome alpha subunit</fullName>
    </alternativeName>
    <alternativeName>
        <fullName evidence="1">Proteasome core protein PrcA</fullName>
    </alternativeName>
</protein>
<evidence type="ECO:0000255" key="1">
    <source>
        <dbReference type="HAMAP-Rule" id="MF_00289"/>
    </source>
</evidence>
<evidence type="ECO:0000305" key="2"/>